<comment type="function">
    <text evidence="1">Nucleoside triphosphate pyrophosphatase that hydrolyzes dTTP and UTP. May have a dual role in cell division arrest and in preventing the incorporation of modified nucleotides into cellular nucleic acids.</text>
</comment>
<comment type="catalytic activity">
    <reaction evidence="1">
        <text>dTTP + H2O = dTMP + diphosphate + H(+)</text>
        <dbReference type="Rhea" id="RHEA:28534"/>
        <dbReference type="ChEBI" id="CHEBI:15377"/>
        <dbReference type="ChEBI" id="CHEBI:15378"/>
        <dbReference type="ChEBI" id="CHEBI:33019"/>
        <dbReference type="ChEBI" id="CHEBI:37568"/>
        <dbReference type="ChEBI" id="CHEBI:63528"/>
        <dbReference type="EC" id="3.6.1.9"/>
    </reaction>
</comment>
<comment type="catalytic activity">
    <reaction evidence="1">
        <text>UTP + H2O = UMP + diphosphate + H(+)</text>
        <dbReference type="Rhea" id="RHEA:29395"/>
        <dbReference type="ChEBI" id="CHEBI:15377"/>
        <dbReference type="ChEBI" id="CHEBI:15378"/>
        <dbReference type="ChEBI" id="CHEBI:33019"/>
        <dbReference type="ChEBI" id="CHEBI:46398"/>
        <dbReference type="ChEBI" id="CHEBI:57865"/>
        <dbReference type="EC" id="3.6.1.9"/>
    </reaction>
</comment>
<comment type="cofactor">
    <cofactor evidence="1">
        <name>a divalent metal cation</name>
        <dbReference type="ChEBI" id="CHEBI:60240"/>
    </cofactor>
</comment>
<comment type="subcellular location">
    <subcellularLocation>
        <location evidence="1">Cytoplasm</location>
    </subcellularLocation>
</comment>
<comment type="similarity">
    <text evidence="1">Belongs to the Maf family. YhdE subfamily.</text>
</comment>
<dbReference type="EC" id="3.6.1.9" evidence="1"/>
<dbReference type="EMBL" id="CP000158">
    <property type="protein sequence ID" value="ABI75385.1"/>
    <property type="molecule type" value="Genomic_DNA"/>
</dbReference>
<dbReference type="RefSeq" id="WP_011646372.1">
    <property type="nucleotide sequence ID" value="NC_008358.1"/>
</dbReference>
<dbReference type="SMR" id="Q0C2H1"/>
<dbReference type="STRING" id="228405.HNE_1355"/>
<dbReference type="KEGG" id="hne:HNE_1355"/>
<dbReference type="eggNOG" id="COG0424">
    <property type="taxonomic scope" value="Bacteria"/>
</dbReference>
<dbReference type="HOGENOM" id="CLU_040416_2_0_5"/>
<dbReference type="Proteomes" id="UP000001959">
    <property type="component" value="Chromosome"/>
</dbReference>
<dbReference type="GO" id="GO:0005737">
    <property type="term" value="C:cytoplasm"/>
    <property type="evidence" value="ECO:0007669"/>
    <property type="project" value="UniProtKB-SubCell"/>
</dbReference>
<dbReference type="GO" id="GO:0036218">
    <property type="term" value="F:dTTP diphosphatase activity"/>
    <property type="evidence" value="ECO:0007669"/>
    <property type="project" value="RHEA"/>
</dbReference>
<dbReference type="GO" id="GO:0036221">
    <property type="term" value="F:UTP diphosphatase activity"/>
    <property type="evidence" value="ECO:0007669"/>
    <property type="project" value="RHEA"/>
</dbReference>
<dbReference type="GO" id="GO:0009117">
    <property type="term" value="P:nucleotide metabolic process"/>
    <property type="evidence" value="ECO:0007669"/>
    <property type="project" value="UniProtKB-KW"/>
</dbReference>
<dbReference type="CDD" id="cd00555">
    <property type="entry name" value="Maf"/>
    <property type="match status" value="1"/>
</dbReference>
<dbReference type="Gene3D" id="3.90.950.10">
    <property type="match status" value="1"/>
</dbReference>
<dbReference type="HAMAP" id="MF_00528">
    <property type="entry name" value="Maf"/>
    <property type="match status" value="1"/>
</dbReference>
<dbReference type="InterPro" id="IPR029001">
    <property type="entry name" value="ITPase-like_fam"/>
</dbReference>
<dbReference type="InterPro" id="IPR003697">
    <property type="entry name" value="Maf-like"/>
</dbReference>
<dbReference type="NCBIfam" id="TIGR00172">
    <property type="entry name" value="maf"/>
    <property type="match status" value="1"/>
</dbReference>
<dbReference type="PANTHER" id="PTHR43213">
    <property type="entry name" value="BIFUNCTIONAL DTTP/UTP PYROPHOSPHATASE/METHYLTRANSFERASE PROTEIN-RELATED"/>
    <property type="match status" value="1"/>
</dbReference>
<dbReference type="PANTHER" id="PTHR43213:SF5">
    <property type="entry name" value="BIFUNCTIONAL DTTP_UTP PYROPHOSPHATASE_METHYLTRANSFERASE PROTEIN-RELATED"/>
    <property type="match status" value="1"/>
</dbReference>
<dbReference type="Pfam" id="PF02545">
    <property type="entry name" value="Maf"/>
    <property type="match status" value="1"/>
</dbReference>
<dbReference type="PIRSF" id="PIRSF006305">
    <property type="entry name" value="Maf"/>
    <property type="match status" value="1"/>
</dbReference>
<dbReference type="SUPFAM" id="SSF52972">
    <property type="entry name" value="ITPase-like"/>
    <property type="match status" value="1"/>
</dbReference>
<name>NTPPA_HYPNA</name>
<proteinExistence type="inferred from homology"/>
<protein>
    <recommendedName>
        <fullName evidence="1">dTTP/UTP pyrophosphatase</fullName>
        <shortName evidence="1">dTTPase/UTPase</shortName>
        <ecNumber evidence="1">3.6.1.9</ecNumber>
    </recommendedName>
    <alternativeName>
        <fullName evidence="1">Nucleoside triphosphate pyrophosphatase</fullName>
    </alternativeName>
    <alternativeName>
        <fullName evidence="1">Nucleotide pyrophosphatase</fullName>
        <shortName evidence="1">Nucleotide PPase</shortName>
    </alternativeName>
</protein>
<sequence length="191" mass="20071">MPGSAPLILASASPRRLELLAQIGIVPDRVAPTDIDETRRKAESPRELALRLAREKAAACDAEGAFVLAADTVVALGQRNLEKAADETEAADFLRLLSGRAHQCITGVAVRAPSGQIVSRAVLARVKMKRLTEAEIAAYVASGDWKGKAGGYGIQGAAGGFVTAINGSYTAIVGLPLYETKSLLEGLGYRR</sequence>
<reference key="1">
    <citation type="journal article" date="2006" name="J. Bacteriol.">
        <title>Comparative genomic evidence for a close relationship between the dimorphic prosthecate bacteria Hyphomonas neptunium and Caulobacter crescentus.</title>
        <authorList>
            <person name="Badger J.H."/>
            <person name="Hoover T.R."/>
            <person name="Brun Y.V."/>
            <person name="Weiner R.M."/>
            <person name="Laub M.T."/>
            <person name="Alexandre G."/>
            <person name="Mrazek J."/>
            <person name="Ren Q."/>
            <person name="Paulsen I.T."/>
            <person name="Nelson K.E."/>
            <person name="Khouri H.M."/>
            <person name="Radune D."/>
            <person name="Sosa J."/>
            <person name="Dodson R.J."/>
            <person name="Sullivan S.A."/>
            <person name="Rosovitz M.J."/>
            <person name="Madupu R."/>
            <person name="Brinkac L.M."/>
            <person name="Durkin A.S."/>
            <person name="Daugherty S.C."/>
            <person name="Kothari S.P."/>
            <person name="Giglio M.G."/>
            <person name="Zhou L."/>
            <person name="Haft D.H."/>
            <person name="Selengut J.D."/>
            <person name="Davidsen T.M."/>
            <person name="Yang Q."/>
            <person name="Zafar N."/>
            <person name="Ward N.L."/>
        </authorList>
    </citation>
    <scope>NUCLEOTIDE SEQUENCE [LARGE SCALE GENOMIC DNA]</scope>
    <source>
        <strain>ATCC 15444</strain>
    </source>
</reference>
<evidence type="ECO:0000255" key="1">
    <source>
        <dbReference type="HAMAP-Rule" id="MF_00528"/>
    </source>
</evidence>
<accession>Q0C2H1</accession>
<keyword id="KW-0963">Cytoplasm</keyword>
<keyword id="KW-0378">Hydrolase</keyword>
<keyword id="KW-0546">Nucleotide metabolism</keyword>
<keyword id="KW-1185">Reference proteome</keyword>
<gene>
    <name type="ordered locus">HNE_1355</name>
</gene>
<feature type="chain" id="PRO_0000267322" description="dTTP/UTP pyrophosphatase">
    <location>
        <begin position="1"/>
        <end position="191"/>
    </location>
</feature>
<feature type="active site" description="Proton acceptor" evidence="1">
    <location>
        <position position="71"/>
    </location>
</feature>
<feature type="site" description="Important for substrate specificity" evidence="1">
    <location>
        <position position="15"/>
    </location>
</feature>
<feature type="site" description="Important for substrate specificity" evidence="1">
    <location>
        <position position="72"/>
    </location>
</feature>
<feature type="site" description="Important for substrate specificity" evidence="1">
    <location>
        <position position="155"/>
    </location>
</feature>
<organism>
    <name type="scientific">Hyphomonas neptunium (strain ATCC 15444)</name>
    <dbReference type="NCBI Taxonomy" id="228405"/>
    <lineage>
        <taxon>Bacteria</taxon>
        <taxon>Pseudomonadati</taxon>
        <taxon>Pseudomonadota</taxon>
        <taxon>Alphaproteobacteria</taxon>
        <taxon>Hyphomonadales</taxon>
        <taxon>Hyphomonadaceae</taxon>
        <taxon>Hyphomonas</taxon>
    </lineage>
</organism>